<evidence type="ECO:0000255" key="1">
    <source>
        <dbReference type="PROSITE-ProRule" id="PRU00066"/>
    </source>
</evidence>
<evidence type="ECO:0000255" key="2">
    <source>
        <dbReference type="PROSITE-ProRule" id="PRU00171"/>
    </source>
</evidence>
<evidence type="ECO:0000256" key="3">
    <source>
        <dbReference type="SAM" id="MobiDB-lite"/>
    </source>
</evidence>
<evidence type="ECO:0000269" key="4">
    <source>
    </source>
</evidence>
<organism>
    <name type="scientific">Schizosaccharomyces pombe (strain 972 / ATCC 24843)</name>
    <name type="common">Fission yeast</name>
    <dbReference type="NCBI Taxonomy" id="284812"/>
    <lineage>
        <taxon>Eukaryota</taxon>
        <taxon>Fungi</taxon>
        <taxon>Dikarya</taxon>
        <taxon>Ascomycota</taxon>
        <taxon>Taphrinomycotina</taxon>
        <taxon>Schizosaccharomycetes</taxon>
        <taxon>Schizosaccharomycetales</taxon>
        <taxon>Schizosaccharomycetaceae</taxon>
        <taxon>Schizosaccharomyces</taxon>
    </lineage>
</organism>
<name>RGS1_SCHPO</name>
<comment type="function">
    <text evidence="4">Negatively regulates pheromone signaling during mating. Acts in a negative feedback loop that is essential for the mating process. This loop acts to down-regulate cellular sensitivity to pheromone. Activated by ste11.</text>
</comment>
<comment type="subcellular location">
    <subcellularLocation>
        <location evidence="4">Nucleus</location>
    </subcellularLocation>
    <subcellularLocation>
        <location evidence="4">Cytoplasm</location>
    </subcellularLocation>
</comment>
<comment type="induction">
    <text evidence="4">By nitrogen starvation and pheromone.</text>
</comment>
<comment type="domain">
    <text evidence="4">The fungal-differentiation regulator (Fungal-DR) domain is only found in fungal regulator of G-protein signaling (RGS) proteins that regulate differentiation pathways. It is required for function.</text>
</comment>
<dbReference type="EMBL" id="CU329670">
    <property type="protein sequence ID" value="CAA91077.1"/>
    <property type="molecule type" value="Genomic_DNA"/>
</dbReference>
<dbReference type="PIR" id="T38179">
    <property type="entry name" value="S62427"/>
</dbReference>
<dbReference type="RefSeq" id="NP_593029.1">
    <property type="nucleotide sequence ID" value="NM_001018428.2"/>
</dbReference>
<dbReference type="SMR" id="Q09777"/>
<dbReference type="BioGRID" id="278258">
    <property type="interactions" value="6"/>
</dbReference>
<dbReference type="FunCoup" id="Q09777">
    <property type="interactions" value="7"/>
</dbReference>
<dbReference type="STRING" id="284812.Q09777"/>
<dbReference type="iPTMnet" id="Q09777"/>
<dbReference type="PaxDb" id="4896-SPAC22F3.12c.1"/>
<dbReference type="EnsemblFungi" id="SPAC22F3.12c.1">
    <property type="protein sequence ID" value="SPAC22F3.12c.1:pep"/>
    <property type="gene ID" value="SPAC22F3.12c"/>
</dbReference>
<dbReference type="GeneID" id="2541764"/>
<dbReference type="KEGG" id="spo:2541764"/>
<dbReference type="PomBase" id="SPAC22F3.12c">
    <property type="gene designation" value="rgs1"/>
</dbReference>
<dbReference type="VEuPathDB" id="FungiDB:SPAC22F3.12c"/>
<dbReference type="eggNOG" id="KOG3589">
    <property type="taxonomic scope" value="Eukaryota"/>
</dbReference>
<dbReference type="HOGENOM" id="CLU_567611_0_0_1"/>
<dbReference type="InParanoid" id="Q09777"/>
<dbReference type="OMA" id="CANNDDR"/>
<dbReference type="PhylomeDB" id="Q09777"/>
<dbReference type="Reactome" id="R-SPO-416476">
    <property type="pathway name" value="G alpha (q) signalling events"/>
</dbReference>
<dbReference type="Reactome" id="R-SPO-418594">
    <property type="pathway name" value="G alpha (i) signalling events"/>
</dbReference>
<dbReference type="Reactome" id="R-SPO-418597">
    <property type="pathway name" value="G alpha (z) signalling events"/>
</dbReference>
<dbReference type="PRO" id="PR:Q09777"/>
<dbReference type="Proteomes" id="UP000002485">
    <property type="component" value="Chromosome I"/>
</dbReference>
<dbReference type="GO" id="GO:0005737">
    <property type="term" value="C:cytoplasm"/>
    <property type="evidence" value="ECO:0000314"/>
    <property type="project" value="PomBase"/>
</dbReference>
<dbReference type="GO" id="GO:0005829">
    <property type="term" value="C:cytosol"/>
    <property type="evidence" value="ECO:0007005"/>
    <property type="project" value="PomBase"/>
</dbReference>
<dbReference type="GO" id="GO:0005634">
    <property type="term" value="C:nucleus"/>
    <property type="evidence" value="ECO:0000314"/>
    <property type="project" value="PomBase"/>
</dbReference>
<dbReference type="GO" id="GO:0005096">
    <property type="term" value="F:GTPase activator activity"/>
    <property type="evidence" value="ECO:0000266"/>
    <property type="project" value="PomBase"/>
</dbReference>
<dbReference type="GO" id="GO:0090029">
    <property type="term" value="P:negative regulation of pheromone-dependent signal transduction involved in conjugation with cellular fusion"/>
    <property type="evidence" value="ECO:0000315"/>
    <property type="project" value="PomBase"/>
</dbReference>
<dbReference type="GO" id="GO:0071507">
    <property type="term" value="P:pheromone response MAPK cascade"/>
    <property type="evidence" value="ECO:0000315"/>
    <property type="project" value="PomBase"/>
</dbReference>
<dbReference type="CDD" id="cd04450">
    <property type="entry name" value="DEP_RGS7-like"/>
    <property type="match status" value="1"/>
</dbReference>
<dbReference type="CDD" id="cd08708">
    <property type="entry name" value="RGS_FLBA"/>
    <property type="match status" value="1"/>
</dbReference>
<dbReference type="Gene3D" id="1.10.167.10">
    <property type="entry name" value="Regulator of G-protein Signalling 4, domain 2"/>
    <property type="match status" value="1"/>
</dbReference>
<dbReference type="InterPro" id="IPR000591">
    <property type="entry name" value="DEP_dom"/>
</dbReference>
<dbReference type="InterPro" id="IPR016137">
    <property type="entry name" value="RGS"/>
</dbReference>
<dbReference type="InterPro" id="IPR036305">
    <property type="entry name" value="RGS_sf"/>
</dbReference>
<dbReference type="InterPro" id="IPR044926">
    <property type="entry name" value="RGS_subdomain_2"/>
</dbReference>
<dbReference type="PANTHER" id="PTHR10845:SF192">
    <property type="entry name" value="DOUBLE HIT, ISOFORM B"/>
    <property type="match status" value="1"/>
</dbReference>
<dbReference type="PANTHER" id="PTHR10845">
    <property type="entry name" value="REGULATOR OF G PROTEIN SIGNALING"/>
    <property type="match status" value="1"/>
</dbReference>
<dbReference type="Pfam" id="PF00615">
    <property type="entry name" value="RGS"/>
    <property type="match status" value="1"/>
</dbReference>
<dbReference type="PRINTS" id="PR01301">
    <property type="entry name" value="RGSPROTEIN"/>
</dbReference>
<dbReference type="SMART" id="SM00049">
    <property type="entry name" value="DEP"/>
    <property type="match status" value="2"/>
</dbReference>
<dbReference type="SMART" id="SM00315">
    <property type="entry name" value="RGS"/>
    <property type="match status" value="1"/>
</dbReference>
<dbReference type="SUPFAM" id="SSF48097">
    <property type="entry name" value="Regulator of G-protein signaling, RGS"/>
    <property type="match status" value="1"/>
</dbReference>
<dbReference type="PROSITE" id="PS50186">
    <property type="entry name" value="DEP"/>
    <property type="match status" value="1"/>
</dbReference>
<dbReference type="PROSITE" id="PS50132">
    <property type="entry name" value="RGS"/>
    <property type="match status" value="1"/>
</dbReference>
<sequence>MPALHNPSSPPPSYEAVTSYRNGNSIDSGDKRQQCSRLMKITSNGRPYSKDFLELFSTMVISTNFSRNRYRFSYVENSCTLLQLLSTLENLQLSQVNRIKSRCGSKVLKSTTKFTIPKTAAKCLCNTFLNARLLQIVNNPSARKFSNEKCLLQLTRKGYSVVSEFLQHNGHNSQAELYASKWNHSAPVIVSISRFSSTDQILKDSSFCEMLLVRMLGSVHEIGKSKNPLLVPVYSVSSPSPKDSLSKVTKYQMFGIDIAEWLMCNTMLLDWSEMETVASDLLIHSYIAYENNSETPLKFSYAKGVSYFLTGKGIATLGWTKNVSNNKLINKINEVEKGSTNKEILETILRKPNLQTYFFEFLKKNFCDENQRFYSEVCEFNDYFSHANETNDHEAIRESFAHACGIYNCFLSSNAPNAVNLPSDLYEKITNHMALAMEVEPLNEWLQLIHILLLEAQTAVLDLMAGDSLLKFLELNGGLGI</sequence>
<keyword id="KW-0963">Cytoplasm</keyword>
<keyword id="KW-0539">Nucleus</keyword>
<keyword id="KW-0589">Pheromone response</keyword>
<keyword id="KW-1185">Reference proteome</keyword>
<keyword id="KW-0346">Stress response</keyword>
<accession>Q09777</accession>
<feature type="chain" id="PRO_0000204242" description="Regulator of G-protein signaling 1">
    <location>
        <begin position="1"/>
        <end position="481"/>
    </location>
</feature>
<feature type="domain" description="DEP" evidence="1">
    <location>
        <begin position="232"/>
        <end position="312"/>
    </location>
</feature>
<feature type="domain" description="RGS" evidence="2">
    <location>
        <begin position="344"/>
        <end position="474"/>
    </location>
</feature>
<feature type="region of interest" description="Disordered" evidence="3">
    <location>
        <begin position="1"/>
        <end position="31"/>
    </location>
</feature>
<feature type="region of interest" description="Fungal-DR">
    <location>
        <begin position="33"/>
        <end position="227"/>
    </location>
</feature>
<proteinExistence type="evidence at transcript level"/>
<reference key="1">
    <citation type="journal article" date="2002" name="Nature">
        <title>The genome sequence of Schizosaccharomyces pombe.</title>
        <authorList>
            <person name="Wood V."/>
            <person name="Gwilliam R."/>
            <person name="Rajandream M.A."/>
            <person name="Lyne M.H."/>
            <person name="Lyne R."/>
            <person name="Stewart A."/>
            <person name="Sgouros J.G."/>
            <person name="Peat N."/>
            <person name="Hayles J."/>
            <person name="Baker S.G."/>
            <person name="Basham D."/>
            <person name="Bowman S."/>
            <person name="Brooks K."/>
            <person name="Brown D."/>
            <person name="Brown S."/>
            <person name="Chillingworth T."/>
            <person name="Churcher C.M."/>
            <person name="Collins M."/>
            <person name="Connor R."/>
            <person name="Cronin A."/>
            <person name="Davis P."/>
            <person name="Feltwell T."/>
            <person name="Fraser A."/>
            <person name="Gentles S."/>
            <person name="Goble A."/>
            <person name="Hamlin N."/>
            <person name="Harris D.E."/>
            <person name="Hidalgo J."/>
            <person name="Hodgson G."/>
            <person name="Holroyd S."/>
            <person name="Hornsby T."/>
            <person name="Howarth S."/>
            <person name="Huckle E.J."/>
            <person name="Hunt S."/>
            <person name="Jagels K."/>
            <person name="James K.D."/>
            <person name="Jones L."/>
            <person name="Jones M."/>
            <person name="Leather S."/>
            <person name="McDonald S."/>
            <person name="McLean J."/>
            <person name="Mooney P."/>
            <person name="Moule S."/>
            <person name="Mungall K.L."/>
            <person name="Murphy L.D."/>
            <person name="Niblett D."/>
            <person name="Odell C."/>
            <person name="Oliver K."/>
            <person name="O'Neil S."/>
            <person name="Pearson D."/>
            <person name="Quail M.A."/>
            <person name="Rabbinowitsch E."/>
            <person name="Rutherford K.M."/>
            <person name="Rutter S."/>
            <person name="Saunders D."/>
            <person name="Seeger K."/>
            <person name="Sharp S."/>
            <person name="Skelton J."/>
            <person name="Simmonds M.N."/>
            <person name="Squares R."/>
            <person name="Squares S."/>
            <person name="Stevens K."/>
            <person name="Taylor K."/>
            <person name="Taylor R.G."/>
            <person name="Tivey A."/>
            <person name="Walsh S.V."/>
            <person name="Warren T."/>
            <person name="Whitehead S."/>
            <person name="Woodward J.R."/>
            <person name="Volckaert G."/>
            <person name="Aert R."/>
            <person name="Robben J."/>
            <person name="Grymonprez B."/>
            <person name="Weltjens I."/>
            <person name="Vanstreels E."/>
            <person name="Rieger M."/>
            <person name="Schaefer M."/>
            <person name="Mueller-Auer S."/>
            <person name="Gabel C."/>
            <person name="Fuchs M."/>
            <person name="Duesterhoeft A."/>
            <person name="Fritzc C."/>
            <person name="Holzer E."/>
            <person name="Moestl D."/>
            <person name="Hilbert H."/>
            <person name="Borzym K."/>
            <person name="Langer I."/>
            <person name="Beck A."/>
            <person name="Lehrach H."/>
            <person name="Reinhardt R."/>
            <person name="Pohl T.M."/>
            <person name="Eger P."/>
            <person name="Zimmermann W."/>
            <person name="Wedler H."/>
            <person name="Wambutt R."/>
            <person name="Purnelle B."/>
            <person name="Goffeau A."/>
            <person name="Cadieu E."/>
            <person name="Dreano S."/>
            <person name="Gloux S."/>
            <person name="Lelaure V."/>
            <person name="Mottier S."/>
            <person name="Galibert F."/>
            <person name="Aves S.J."/>
            <person name="Xiang Z."/>
            <person name="Hunt C."/>
            <person name="Moore K."/>
            <person name="Hurst S.M."/>
            <person name="Lucas M."/>
            <person name="Rochet M."/>
            <person name="Gaillardin C."/>
            <person name="Tallada V.A."/>
            <person name="Garzon A."/>
            <person name="Thode G."/>
            <person name="Daga R.R."/>
            <person name="Cruzado L."/>
            <person name="Jimenez J."/>
            <person name="Sanchez M."/>
            <person name="del Rey F."/>
            <person name="Benito J."/>
            <person name="Dominguez A."/>
            <person name="Revuelta J.L."/>
            <person name="Moreno S."/>
            <person name="Armstrong J."/>
            <person name="Forsburg S.L."/>
            <person name="Cerutti L."/>
            <person name="Lowe T."/>
            <person name="McCombie W.R."/>
            <person name="Paulsen I."/>
            <person name="Potashkin J."/>
            <person name="Shpakovski G.V."/>
            <person name="Ussery D."/>
            <person name="Barrell B.G."/>
            <person name="Nurse P."/>
        </authorList>
    </citation>
    <scope>NUCLEOTIDE SEQUENCE [LARGE SCALE GENOMIC DNA]</scope>
    <source>
        <strain>972 / ATCC 24843</strain>
    </source>
</reference>
<reference key="2">
    <citation type="journal article" date="2001" name="Genes Cells">
        <title>The RGS domain-containing fission yeast protein, Rgs1p, regulates pheromone signalling and is required for mating.</title>
        <authorList>
            <person name="Pereira P.S."/>
            <person name="Jones N.C."/>
        </authorList>
    </citation>
    <scope>FUNCTION</scope>
    <scope>SUBCELLULAR LOCATION</scope>
    <scope>INDUCTION</scope>
    <scope>DOMAIN FUNGAL-DR</scope>
</reference>
<protein>
    <recommendedName>
        <fullName>Regulator of G-protein signaling 1</fullName>
    </recommendedName>
</protein>
<gene>
    <name type="primary">rgs1</name>
    <name type="ORF">SPAC22F3.12c</name>
</gene>